<reference key="1">
    <citation type="journal article" date="2008" name="ISME J.">
        <title>Comparative genomics of two ecotypes of the marine planktonic copiotroph Alteromonas macleodii suggests alternative lifestyles associated with different kinds of particulate organic matter.</title>
        <authorList>
            <person name="Ivars-Martinez E."/>
            <person name="Martin-Cuadrado A.-B."/>
            <person name="D'Auria G."/>
            <person name="Mira A."/>
            <person name="Ferriera S."/>
            <person name="Johnson J."/>
            <person name="Friedman R."/>
            <person name="Rodriguez-Valera F."/>
        </authorList>
    </citation>
    <scope>NUCLEOTIDE SEQUENCE [LARGE SCALE GENOMIC DNA]</scope>
    <source>
        <strain>DSM 17117 / CIP 110805 / LMG 28347 / Deep ecotype</strain>
    </source>
</reference>
<proteinExistence type="inferred from homology"/>
<name>SYT_ALTMD</name>
<evidence type="ECO:0000255" key="1">
    <source>
        <dbReference type="HAMAP-Rule" id="MF_00184"/>
    </source>
</evidence>
<evidence type="ECO:0000255" key="2">
    <source>
        <dbReference type="PROSITE-ProRule" id="PRU01228"/>
    </source>
</evidence>
<comment type="function">
    <text evidence="1">Catalyzes the attachment of threonine to tRNA(Thr) in a two-step reaction: L-threonine is first activated by ATP to form Thr-AMP and then transferred to the acceptor end of tRNA(Thr). Also edits incorrectly charged L-seryl-tRNA(Thr).</text>
</comment>
<comment type="catalytic activity">
    <reaction evidence="1">
        <text>tRNA(Thr) + L-threonine + ATP = L-threonyl-tRNA(Thr) + AMP + diphosphate + H(+)</text>
        <dbReference type="Rhea" id="RHEA:24624"/>
        <dbReference type="Rhea" id="RHEA-COMP:9670"/>
        <dbReference type="Rhea" id="RHEA-COMP:9704"/>
        <dbReference type="ChEBI" id="CHEBI:15378"/>
        <dbReference type="ChEBI" id="CHEBI:30616"/>
        <dbReference type="ChEBI" id="CHEBI:33019"/>
        <dbReference type="ChEBI" id="CHEBI:57926"/>
        <dbReference type="ChEBI" id="CHEBI:78442"/>
        <dbReference type="ChEBI" id="CHEBI:78534"/>
        <dbReference type="ChEBI" id="CHEBI:456215"/>
        <dbReference type="EC" id="6.1.1.3"/>
    </reaction>
</comment>
<comment type="cofactor">
    <cofactor evidence="1">
        <name>Zn(2+)</name>
        <dbReference type="ChEBI" id="CHEBI:29105"/>
    </cofactor>
    <text evidence="1">Binds 1 zinc ion per subunit.</text>
</comment>
<comment type="subunit">
    <text evidence="1">Homodimer.</text>
</comment>
<comment type="subcellular location">
    <subcellularLocation>
        <location evidence="1">Cytoplasm</location>
    </subcellularLocation>
</comment>
<comment type="similarity">
    <text evidence="1">Belongs to the class-II aminoacyl-tRNA synthetase family.</text>
</comment>
<organism>
    <name type="scientific">Alteromonas mediterranea (strain DSM 17117 / CIP 110805 / LMG 28347 / Deep ecotype)</name>
    <dbReference type="NCBI Taxonomy" id="1774373"/>
    <lineage>
        <taxon>Bacteria</taxon>
        <taxon>Pseudomonadati</taxon>
        <taxon>Pseudomonadota</taxon>
        <taxon>Gammaproteobacteria</taxon>
        <taxon>Alteromonadales</taxon>
        <taxon>Alteromonadaceae</taxon>
        <taxon>Alteromonas/Salinimonas group</taxon>
        <taxon>Alteromonas</taxon>
    </lineage>
</organism>
<feature type="chain" id="PRO_1000098539" description="Threonine--tRNA ligase">
    <location>
        <begin position="1"/>
        <end position="638"/>
    </location>
</feature>
<feature type="domain" description="TGS" evidence="2">
    <location>
        <begin position="1"/>
        <end position="61"/>
    </location>
</feature>
<feature type="region of interest" description="Catalytic" evidence="1">
    <location>
        <begin position="243"/>
        <end position="534"/>
    </location>
</feature>
<feature type="binding site" evidence="1">
    <location>
        <position position="334"/>
    </location>
    <ligand>
        <name>Zn(2+)</name>
        <dbReference type="ChEBI" id="CHEBI:29105"/>
    </ligand>
</feature>
<feature type="binding site" evidence="1">
    <location>
        <position position="385"/>
    </location>
    <ligand>
        <name>Zn(2+)</name>
        <dbReference type="ChEBI" id="CHEBI:29105"/>
    </ligand>
</feature>
<feature type="binding site" evidence="1">
    <location>
        <position position="511"/>
    </location>
    <ligand>
        <name>Zn(2+)</name>
        <dbReference type="ChEBI" id="CHEBI:29105"/>
    </ligand>
</feature>
<protein>
    <recommendedName>
        <fullName evidence="1">Threonine--tRNA ligase</fullName>
        <ecNumber evidence="1">6.1.1.3</ecNumber>
    </recommendedName>
    <alternativeName>
        <fullName evidence="1">Threonyl-tRNA synthetase</fullName>
        <shortName evidence="1">ThrRS</shortName>
    </alternativeName>
</protein>
<accession>B4RSL8</accession>
<accession>F2G8I7</accession>
<dbReference type="EC" id="6.1.1.3" evidence="1"/>
<dbReference type="EMBL" id="CP001103">
    <property type="protein sequence ID" value="AEA97756.1"/>
    <property type="molecule type" value="Genomic_DNA"/>
</dbReference>
<dbReference type="RefSeq" id="WP_012518089.1">
    <property type="nucleotide sequence ID" value="NC_011138.3"/>
</dbReference>
<dbReference type="SMR" id="B4RSL8"/>
<dbReference type="KEGG" id="amc:MADE_1008080"/>
<dbReference type="HOGENOM" id="CLU_008554_0_1_6"/>
<dbReference type="Proteomes" id="UP000001870">
    <property type="component" value="Chromosome"/>
</dbReference>
<dbReference type="GO" id="GO:0005829">
    <property type="term" value="C:cytosol"/>
    <property type="evidence" value="ECO:0007669"/>
    <property type="project" value="TreeGrafter"/>
</dbReference>
<dbReference type="GO" id="GO:0005524">
    <property type="term" value="F:ATP binding"/>
    <property type="evidence" value="ECO:0007669"/>
    <property type="project" value="UniProtKB-UniRule"/>
</dbReference>
<dbReference type="GO" id="GO:0046872">
    <property type="term" value="F:metal ion binding"/>
    <property type="evidence" value="ECO:0007669"/>
    <property type="project" value="UniProtKB-KW"/>
</dbReference>
<dbReference type="GO" id="GO:0004829">
    <property type="term" value="F:threonine-tRNA ligase activity"/>
    <property type="evidence" value="ECO:0007669"/>
    <property type="project" value="UniProtKB-UniRule"/>
</dbReference>
<dbReference type="GO" id="GO:0000049">
    <property type="term" value="F:tRNA binding"/>
    <property type="evidence" value="ECO:0007669"/>
    <property type="project" value="UniProtKB-KW"/>
</dbReference>
<dbReference type="GO" id="GO:0006435">
    <property type="term" value="P:threonyl-tRNA aminoacylation"/>
    <property type="evidence" value="ECO:0007669"/>
    <property type="project" value="UniProtKB-UniRule"/>
</dbReference>
<dbReference type="CDD" id="cd01667">
    <property type="entry name" value="TGS_ThrRS"/>
    <property type="match status" value="1"/>
</dbReference>
<dbReference type="CDD" id="cd00860">
    <property type="entry name" value="ThrRS_anticodon"/>
    <property type="match status" value="1"/>
</dbReference>
<dbReference type="CDD" id="cd00771">
    <property type="entry name" value="ThrRS_core"/>
    <property type="match status" value="1"/>
</dbReference>
<dbReference type="FunFam" id="3.10.20.30:FF:000005">
    <property type="entry name" value="Threonine--tRNA ligase"/>
    <property type="match status" value="1"/>
</dbReference>
<dbReference type="FunFam" id="3.30.54.20:FF:000002">
    <property type="entry name" value="Threonine--tRNA ligase"/>
    <property type="match status" value="1"/>
</dbReference>
<dbReference type="FunFam" id="3.30.930.10:FF:000002">
    <property type="entry name" value="Threonine--tRNA ligase"/>
    <property type="match status" value="1"/>
</dbReference>
<dbReference type="FunFam" id="3.40.50.800:FF:000001">
    <property type="entry name" value="Threonine--tRNA ligase"/>
    <property type="match status" value="1"/>
</dbReference>
<dbReference type="FunFam" id="3.30.980.10:FF:000005">
    <property type="entry name" value="Threonyl-tRNA synthetase, mitochondrial"/>
    <property type="match status" value="1"/>
</dbReference>
<dbReference type="Gene3D" id="3.10.20.30">
    <property type="match status" value="1"/>
</dbReference>
<dbReference type="Gene3D" id="3.30.54.20">
    <property type="match status" value="1"/>
</dbReference>
<dbReference type="Gene3D" id="3.40.50.800">
    <property type="entry name" value="Anticodon-binding domain"/>
    <property type="match status" value="1"/>
</dbReference>
<dbReference type="Gene3D" id="3.30.930.10">
    <property type="entry name" value="Bira Bifunctional Protein, Domain 2"/>
    <property type="match status" value="1"/>
</dbReference>
<dbReference type="Gene3D" id="3.30.980.10">
    <property type="entry name" value="Threonyl-trna Synthetase, Chain A, domain 2"/>
    <property type="match status" value="1"/>
</dbReference>
<dbReference type="HAMAP" id="MF_00184">
    <property type="entry name" value="Thr_tRNA_synth"/>
    <property type="match status" value="1"/>
</dbReference>
<dbReference type="InterPro" id="IPR002314">
    <property type="entry name" value="aa-tRNA-synt_IIb"/>
</dbReference>
<dbReference type="InterPro" id="IPR006195">
    <property type="entry name" value="aa-tRNA-synth_II"/>
</dbReference>
<dbReference type="InterPro" id="IPR045864">
    <property type="entry name" value="aa-tRNA-synth_II/BPL/LPL"/>
</dbReference>
<dbReference type="InterPro" id="IPR004154">
    <property type="entry name" value="Anticodon-bd"/>
</dbReference>
<dbReference type="InterPro" id="IPR036621">
    <property type="entry name" value="Anticodon-bd_dom_sf"/>
</dbReference>
<dbReference type="InterPro" id="IPR012675">
    <property type="entry name" value="Beta-grasp_dom_sf"/>
</dbReference>
<dbReference type="InterPro" id="IPR004095">
    <property type="entry name" value="TGS"/>
</dbReference>
<dbReference type="InterPro" id="IPR012676">
    <property type="entry name" value="TGS-like"/>
</dbReference>
<dbReference type="InterPro" id="IPR002320">
    <property type="entry name" value="Thr-tRNA-ligase_IIa"/>
</dbReference>
<dbReference type="InterPro" id="IPR018163">
    <property type="entry name" value="Thr/Ala-tRNA-synth_IIc_edit"/>
</dbReference>
<dbReference type="InterPro" id="IPR047246">
    <property type="entry name" value="ThrRS_anticodon"/>
</dbReference>
<dbReference type="InterPro" id="IPR033728">
    <property type="entry name" value="ThrRS_core"/>
</dbReference>
<dbReference type="InterPro" id="IPR012947">
    <property type="entry name" value="tRNA_SAD"/>
</dbReference>
<dbReference type="NCBIfam" id="TIGR00418">
    <property type="entry name" value="thrS"/>
    <property type="match status" value="1"/>
</dbReference>
<dbReference type="PANTHER" id="PTHR11451:SF44">
    <property type="entry name" value="THREONINE--TRNA LIGASE, CHLOROPLASTIC_MITOCHONDRIAL 2"/>
    <property type="match status" value="1"/>
</dbReference>
<dbReference type="PANTHER" id="PTHR11451">
    <property type="entry name" value="THREONINE-TRNA LIGASE"/>
    <property type="match status" value="1"/>
</dbReference>
<dbReference type="Pfam" id="PF03129">
    <property type="entry name" value="HGTP_anticodon"/>
    <property type="match status" value="1"/>
</dbReference>
<dbReference type="Pfam" id="PF02824">
    <property type="entry name" value="TGS"/>
    <property type="match status" value="1"/>
</dbReference>
<dbReference type="Pfam" id="PF00587">
    <property type="entry name" value="tRNA-synt_2b"/>
    <property type="match status" value="1"/>
</dbReference>
<dbReference type="Pfam" id="PF07973">
    <property type="entry name" value="tRNA_SAD"/>
    <property type="match status" value="1"/>
</dbReference>
<dbReference type="PRINTS" id="PR01047">
    <property type="entry name" value="TRNASYNTHTHR"/>
</dbReference>
<dbReference type="SMART" id="SM00863">
    <property type="entry name" value="tRNA_SAD"/>
    <property type="match status" value="1"/>
</dbReference>
<dbReference type="SUPFAM" id="SSF52954">
    <property type="entry name" value="Class II aaRS ABD-related"/>
    <property type="match status" value="1"/>
</dbReference>
<dbReference type="SUPFAM" id="SSF55681">
    <property type="entry name" value="Class II aaRS and biotin synthetases"/>
    <property type="match status" value="1"/>
</dbReference>
<dbReference type="SUPFAM" id="SSF81271">
    <property type="entry name" value="TGS-like"/>
    <property type="match status" value="1"/>
</dbReference>
<dbReference type="SUPFAM" id="SSF55186">
    <property type="entry name" value="ThrRS/AlaRS common domain"/>
    <property type="match status" value="1"/>
</dbReference>
<dbReference type="PROSITE" id="PS50862">
    <property type="entry name" value="AA_TRNA_LIGASE_II"/>
    <property type="match status" value="1"/>
</dbReference>
<dbReference type="PROSITE" id="PS51880">
    <property type="entry name" value="TGS"/>
    <property type="match status" value="1"/>
</dbReference>
<keyword id="KW-0030">Aminoacyl-tRNA synthetase</keyword>
<keyword id="KW-0067">ATP-binding</keyword>
<keyword id="KW-0963">Cytoplasm</keyword>
<keyword id="KW-0436">Ligase</keyword>
<keyword id="KW-0479">Metal-binding</keyword>
<keyword id="KW-0547">Nucleotide-binding</keyword>
<keyword id="KW-0648">Protein biosynthesis</keyword>
<keyword id="KW-0694">RNA-binding</keyword>
<keyword id="KW-0820">tRNA-binding</keyword>
<keyword id="KW-0862">Zinc</keyword>
<gene>
    <name evidence="1" type="primary">thrS</name>
    <name type="ordered locus">MADE_1008080</name>
</gene>
<sequence>MPVITLPDGSQRAFDNPVSVLDVANDIGPGLAKATIAGKVNGELVDAVDMIDADAQLQIITAKDEEGLEILRHSCAHLLGHAIKQLWPNTKMAIGPVIDNGFYYDVDMEESLTQEDLAKLEKRMLELAKTNYNVVKNKVSWQEARDAFEARGESYKMEILDENISKDDRPALYQHEEYTDMCRGPHVPNMKFCHHFKLMKVAGAYWRGDSDNKMLQRIYGTAWADKKQLKSYLQRLEEAEKRDHRKIGKALNLFHWQEEAPGMVFWHNDGWSIYTELESFVRKKLREYGYDEVKGPLMMDRSLWEKSGHWDKYAENMFTTESEKREYAVKPMNCPGHVQIFNQGLKSYRDLPLRMAEFGCCHRNEPSGALHGLMRVRGFTQDDAHIFCTEEQILEEVSGCIKMVYETYAAFGFENIKVKLSTRPEKRVGADEIWDKSEAALAEALKANDIEFDYQPGEGAFYGPKIEFTLHDCLDRAWQCGTVQLDFSMPGRLGSTYVAEDGERKVPVMIHRAILGSLERFIGILTEEFAGFFPLWLAPQQVVVMNITDKQADYASDCVKKLQDLGFRAKSDLRNEKIGFKIREHTLKRIPYMLVVGDKEMEAGEVAVRSRRGDDLGKMGLEDFIAMAQQEVVEKTIK</sequence>